<gene>
    <name evidence="1" type="primary">arnC</name>
    <name type="ordered locus">Ent638_2078</name>
</gene>
<comment type="function">
    <text evidence="1">Catalyzes the transfer of 4-deoxy-4-formamido-L-arabinose from UDP to undecaprenyl phosphate. The modified arabinose is attached to lipid A and is required for resistance to polymyxin and cationic antimicrobial peptides.</text>
</comment>
<comment type="catalytic activity">
    <reaction evidence="1">
        <text>UDP-4-deoxy-4-formamido-beta-L-arabinose + di-trans,octa-cis-undecaprenyl phosphate = 4-deoxy-4-formamido-alpha-L-arabinopyranosyl di-trans,octa-cis-undecaprenyl phosphate + UDP</text>
        <dbReference type="Rhea" id="RHEA:27722"/>
        <dbReference type="ChEBI" id="CHEBI:58223"/>
        <dbReference type="ChEBI" id="CHEBI:58709"/>
        <dbReference type="ChEBI" id="CHEBI:58909"/>
        <dbReference type="ChEBI" id="CHEBI:60392"/>
        <dbReference type="EC" id="2.4.2.53"/>
    </reaction>
</comment>
<comment type="pathway">
    <text evidence="1">Glycolipid biosynthesis; 4-amino-4-deoxy-alpha-L-arabinose undecaprenyl phosphate biosynthesis; 4-amino-4-deoxy-alpha-L-arabinose undecaprenyl phosphate from UDP-4-deoxy-4-formamido-beta-L-arabinose and undecaprenyl phosphate: step 1/2.</text>
</comment>
<comment type="pathway">
    <text evidence="1">Bacterial outer membrane biogenesis; lipopolysaccharide biosynthesis.</text>
</comment>
<comment type="subcellular location">
    <subcellularLocation>
        <location evidence="1">Cell inner membrane</location>
        <topology evidence="1">Multi-pass membrane protein</topology>
    </subcellularLocation>
</comment>
<comment type="similarity">
    <text evidence="1">Belongs to the glycosyltransferase 2 family.</text>
</comment>
<evidence type="ECO:0000255" key="1">
    <source>
        <dbReference type="HAMAP-Rule" id="MF_01164"/>
    </source>
</evidence>
<protein>
    <recommendedName>
        <fullName evidence="1">Undecaprenyl-phosphate 4-deoxy-4-formamido-L-arabinose transferase</fullName>
        <ecNumber evidence="1">2.4.2.53</ecNumber>
    </recommendedName>
    <alternativeName>
        <fullName evidence="1">Undecaprenyl-phosphate Ara4FN transferase</fullName>
        <shortName evidence="1">Ara4FN transferase</shortName>
    </alternativeName>
</protein>
<organism>
    <name type="scientific">Enterobacter sp. (strain 638)</name>
    <dbReference type="NCBI Taxonomy" id="399742"/>
    <lineage>
        <taxon>Bacteria</taxon>
        <taxon>Pseudomonadati</taxon>
        <taxon>Pseudomonadota</taxon>
        <taxon>Gammaproteobacteria</taxon>
        <taxon>Enterobacterales</taxon>
        <taxon>Enterobacteriaceae</taxon>
        <taxon>Enterobacter</taxon>
    </lineage>
</organism>
<keyword id="KW-0046">Antibiotic resistance</keyword>
<keyword id="KW-0997">Cell inner membrane</keyword>
<keyword id="KW-1003">Cell membrane</keyword>
<keyword id="KW-0328">Glycosyltransferase</keyword>
<keyword id="KW-0441">Lipid A biosynthesis</keyword>
<keyword id="KW-0444">Lipid biosynthesis</keyword>
<keyword id="KW-0443">Lipid metabolism</keyword>
<keyword id="KW-0448">Lipopolysaccharide biosynthesis</keyword>
<keyword id="KW-0472">Membrane</keyword>
<keyword id="KW-0808">Transferase</keyword>
<keyword id="KW-0812">Transmembrane</keyword>
<keyword id="KW-1133">Transmembrane helix</keyword>
<dbReference type="EC" id="2.4.2.53" evidence="1"/>
<dbReference type="EMBL" id="CP000653">
    <property type="protein sequence ID" value="ABP60754.1"/>
    <property type="molecule type" value="Genomic_DNA"/>
</dbReference>
<dbReference type="RefSeq" id="WP_012017469.1">
    <property type="nucleotide sequence ID" value="NC_009436.1"/>
</dbReference>
<dbReference type="SMR" id="A4WAM4"/>
<dbReference type="STRING" id="399742.Ent638_2078"/>
<dbReference type="CAZy" id="GT2">
    <property type="family name" value="Glycosyltransferase Family 2"/>
</dbReference>
<dbReference type="KEGG" id="ent:Ent638_2078"/>
<dbReference type="eggNOG" id="COG0463">
    <property type="taxonomic scope" value="Bacteria"/>
</dbReference>
<dbReference type="HOGENOM" id="CLU_033536_0_0_6"/>
<dbReference type="OrthoDB" id="9811884at2"/>
<dbReference type="UniPathway" id="UPA00030"/>
<dbReference type="UniPathway" id="UPA00036">
    <property type="reaction ID" value="UER00495"/>
</dbReference>
<dbReference type="Proteomes" id="UP000000230">
    <property type="component" value="Chromosome"/>
</dbReference>
<dbReference type="GO" id="GO:0005886">
    <property type="term" value="C:plasma membrane"/>
    <property type="evidence" value="ECO:0007669"/>
    <property type="project" value="UniProtKB-SubCell"/>
</dbReference>
<dbReference type="GO" id="GO:0016780">
    <property type="term" value="F:phosphotransferase activity, for other substituted phosphate groups"/>
    <property type="evidence" value="ECO:0007669"/>
    <property type="project" value="UniProtKB-UniRule"/>
</dbReference>
<dbReference type="GO" id="GO:0099621">
    <property type="term" value="F:undecaprenyl-phosphate 4-deoxy-4-formamido-L-arabinose transferase activity"/>
    <property type="evidence" value="ECO:0007669"/>
    <property type="project" value="UniProtKB-EC"/>
</dbReference>
<dbReference type="GO" id="GO:0036108">
    <property type="term" value="P:4-amino-4-deoxy-alpha-L-arabinopyranosyl undecaprenyl phosphate biosynthetic process"/>
    <property type="evidence" value="ECO:0007669"/>
    <property type="project" value="UniProtKB-UniRule"/>
</dbReference>
<dbReference type="GO" id="GO:0009245">
    <property type="term" value="P:lipid A biosynthetic process"/>
    <property type="evidence" value="ECO:0007669"/>
    <property type="project" value="UniProtKB-UniRule"/>
</dbReference>
<dbReference type="GO" id="GO:0009103">
    <property type="term" value="P:lipopolysaccharide biosynthetic process"/>
    <property type="evidence" value="ECO:0007669"/>
    <property type="project" value="UniProtKB-UniRule"/>
</dbReference>
<dbReference type="GO" id="GO:0046677">
    <property type="term" value="P:response to antibiotic"/>
    <property type="evidence" value="ECO:0007669"/>
    <property type="project" value="UniProtKB-KW"/>
</dbReference>
<dbReference type="CDD" id="cd04187">
    <property type="entry name" value="DPM1_like_bac"/>
    <property type="match status" value="1"/>
</dbReference>
<dbReference type="FunFam" id="3.90.550.10:FF:000019">
    <property type="entry name" value="Undecaprenyl-phosphate 4-deoxy-4-formamido-L-arabinose transferase"/>
    <property type="match status" value="1"/>
</dbReference>
<dbReference type="Gene3D" id="3.90.550.10">
    <property type="entry name" value="Spore Coat Polysaccharide Biosynthesis Protein SpsA, Chain A"/>
    <property type="match status" value="1"/>
</dbReference>
<dbReference type="HAMAP" id="MF_01164">
    <property type="entry name" value="ArnC_transfer"/>
    <property type="match status" value="1"/>
</dbReference>
<dbReference type="InterPro" id="IPR022857">
    <property type="entry name" value="ArnC_tfrase"/>
</dbReference>
<dbReference type="InterPro" id="IPR001173">
    <property type="entry name" value="Glyco_trans_2-like"/>
</dbReference>
<dbReference type="InterPro" id="IPR050256">
    <property type="entry name" value="Glycosyltransferase_2"/>
</dbReference>
<dbReference type="InterPro" id="IPR029044">
    <property type="entry name" value="Nucleotide-diphossugar_trans"/>
</dbReference>
<dbReference type="NCBIfam" id="NF007986">
    <property type="entry name" value="PRK10714.1"/>
    <property type="match status" value="1"/>
</dbReference>
<dbReference type="PANTHER" id="PTHR48090:SF3">
    <property type="entry name" value="UNDECAPRENYL-PHOSPHATE 4-DEOXY-4-FORMAMIDO-L-ARABINOSE TRANSFERASE"/>
    <property type="match status" value="1"/>
</dbReference>
<dbReference type="PANTHER" id="PTHR48090">
    <property type="entry name" value="UNDECAPRENYL-PHOSPHATE 4-DEOXY-4-FORMAMIDO-L-ARABINOSE TRANSFERASE-RELATED"/>
    <property type="match status" value="1"/>
</dbReference>
<dbReference type="Pfam" id="PF00535">
    <property type="entry name" value="Glycos_transf_2"/>
    <property type="match status" value="1"/>
</dbReference>
<dbReference type="SUPFAM" id="SSF53448">
    <property type="entry name" value="Nucleotide-diphospho-sugar transferases"/>
    <property type="match status" value="1"/>
</dbReference>
<proteinExistence type="inferred from homology"/>
<accession>A4WAM4</accession>
<name>ARNC_ENT38</name>
<reference key="1">
    <citation type="journal article" date="2010" name="PLoS Genet.">
        <title>Genome sequence of the plant growth promoting endophytic bacterium Enterobacter sp. 638.</title>
        <authorList>
            <person name="Taghavi S."/>
            <person name="van der Lelie D."/>
            <person name="Hoffman A."/>
            <person name="Zhang Y.B."/>
            <person name="Walla M.D."/>
            <person name="Vangronsveld J."/>
            <person name="Newman L."/>
            <person name="Monchy S."/>
        </authorList>
    </citation>
    <scope>NUCLEOTIDE SEQUENCE [LARGE SCALE GENOMIC DNA]</scope>
    <source>
        <strain>638</strain>
    </source>
</reference>
<sequence>MTKVEAIHKVSVVIPVYNEQESLPELIRRTTAACELLGKDYEILLVDDGSSDESASMLSDAAEEPGSHIVAVLLNRNYGQHNAIMAGFSHVTGDLIVTLDADLQNPPEEIPRLVAKADEGYDVVGTVRQNRQDTWFRKRASRLINRLIQSTTGKAMGDYGCMLRAYRRHIIDAMLHCHERSTFIPILANTFARKAIEIPVHHAEREFGESKYSFMRLINLMYDLVTCLTTTPLRMLSVFGSIIAVLGFTLSVLLVVLRIAFGPQWAADGVFMLFAVLFMFIGAQFVAMGLLGEYIGRIYTDVRARPRYFIQRVVSRGSVSTSKENQQ</sequence>
<feature type="chain" id="PRO_1000065654" description="Undecaprenyl-phosphate 4-deoxy-4-formamido-L-arabinose transferase">
    <location>
        <begin position="1"/>
        <end position="327"/>
    </location>
</feature>
<feature type="transmembrane region" description="Helical" evidence="1">
    <location>
        <begin position="236"/>
        <end position="256"/>
    </location>
</feature>
<feature type="transmembrane region" description="Helical" evidence="1">
    <location>
        <begin position="270"/>
        <end position="290"/>
    </location>
</feature>